<protein>
    <recommendedName>
        <fullName>Tryptophyllin-13</fullName>
    </recommendedName>
</protein>
<name>TY13_BOMVA</name>
<reference evidence="2" key="1">
    <citation type="journal article" date="2004" name="Biol. Chem.">
        <title>Skin secretion of the toad Bombina variegata contains multiple insulin-releasing peptides including bombesin and entirely novel insulinotropic structures.</title>
        <authorList>
            <person name="Marenah L."/>
            <person name="Flatt P.R."/>
            <person name="Orr D.F."/>
            <person name="McClean S."/>
            <person name="Shaw C."/>
            <person name="Abdel-Wahab Y.H."/>
        </authorList>
    </citation>
    <scope>PROTEIN SEQUENCE</scope>
    <scope>FUNCTION</scope>
    <scope>SUBCELLULAR LOCATION</scope>
    <scope>TISSUE SPECIFICITY</scope>
    <scope>MASS SPECTROMETRY</scope>
    <source>
        <tissue evidence="1">Skin secretion</tissue>
    </source>
</reference>
<comment type="function">
    <text evidence="1">Stimulates insulin release.</text>
</comment>
<comment type="subcellular location">
    <subcellularLocation>
        <location evidence="1">Secreted</location>
    </subcellularLocation>
</comment>
<comment type="tissue specificity">
    <text evidence="1">Expressed by the skin glands.</text>
</comment>
<comment type="mass spectrometry" mass="1650.5" method="Electrospray" evidence="1"/>
<comment type="similarity">
    <text evidence="2">Belongs to the frog skin active peptide (FSAP) family. Tryptophillin subfamily.</text>
</comment>
<dbReference type="GO" id="GO:0005576">
    <property type="term" value="C:extracellular region"/>
    <property type="evidence" value="ECO:0000314"/>
    <property type="project" value="UniProtKB"/>
</dbReference>
<dbReference type="GO" id="GO:0005179">
    <property type="term" value="F:hormone activity"/>
    <property type="evidence" value="ECO:0000304"/>
    <property type="project" value="UniProtKB"/>
</dbReference>
<dbReference type="GO" id="GO:0006952">
    <property type="term" value="P:defense response"/>
    <property type="evidence" value="ECO:0000304"/>
    <property type="project" value="UniProtKB"/>
</dbReference>
<dbReference type="GO" id="GO:0050796">
    <property type="term" value="P:regulation of insulin secretion"/>
    <property type="evidence" value="ECO:0000314"/>
    <property type="project" value="UniProtKB"/>
</dbReference>
<dbReference type="InterPro" id="IPR013266">
    <property type="entry name" value="Tryptophillin"/>
</dbReference>
<dbReference type="Pfam" id="PF08248">
    <property type="entry name" value="Tryp_FSAP"/>
    <property type="match status" value="1"/>
</dbReference>
<evidence type="ECO:0000269" key="1">
    <source>
    </source>
</evidence>
<evidence type="ECO:0000305" key="2"/>
<proteinExistence type="evidence at protein level"/>
<sequence length="14" mass="1651">GKPFYPPPIYPEDM</sequence>
<keyword id="KW-0878">Amphibian defense peptide</keyword>
<keyword id="KW-0903">Direct protein sequencing</keyword>
<keyword id="KW-0964">Secreted</keyword>
<accession>P84215</accession>
<feature type="peptide" id="PRO_0000043843" description="Tryptophyllin-13">
    <location>
        <begin position="1"/>
        <end position="14"/>
    </location>
</feature>
<organism>
    <name type="scientific">Bombina variegata</name>
    <name type="common">Yellow-bellied toad</name>
    <dbReference type="NCBI Taxonomy" id="8348"/>
    <lineage>
        <taxon>Eukaryota</taxon>
        <taxon>Metazoa</taxon>
        <taxon>Chordata</taxon>
        <taxon>Craniata</taxon>
        <taxon>Vertebrata</taxon>
        <taxon>Euteleostomi</taxon>
        <taxon>Amphibia</taxon>
        <taxon>Batrachia</taxon>
        <taxon>Anura</taxon>
        <taxon>Bombinatoridae</taxon>
        <taxon>Bombina</taxon>
    </lineage>
</organism>